<evidence type="ECO:0000250" key="1">
    <source>
        <dbReference type="UniProtKB" id="P09234"/>
    </source>
</evidence>
<evidence type="ECO:0000255" key="2">
    <source>
        <dbReference type="HAMAP-Rule" id="MF_03153"/>
    </source>
</evidence>
<evidence type="ECO:0000256" key="3">
    <source>
        <dbReference type="SAM" id="MobiDB-lite"/>
    </source>
</evidence>
<comment type="function">
    <text evidence="2">Component of the spliceosomal U1 snRNP, which is essential for recognition of the pre-mRNA 5' splice-site and the subsequent assembly of the spliceosome. SNRPC/U1-C is directly involved in initial 5' splice-site recognition for both constitutive and regulated alternative splicing. The interaction with the 5' splice-site seems to precede base-pairing between the pre-mRNA and the U1 snRNA. Stimulates commitment or early (E) complex formation by stabilizing the base pairing of the 5' end of the U1 snRNA and the 5' splice-site region.</text>
</comment>
<comment type="subunit">
    <text evidence="1 2">Component of the U1 snRNP. The U1 snRNP is composed of the U1 snRNA and the 7 core Sm proteins SNRPB, SNRPD1, SNRPD2, SNRPD3, SNRPE, SNRPF and SNRPG that assemble in a heptameric protein ring on the Sm site of the small nuclear RNA to form the core snRNP, and at least 3 U1 snRNP-specific proteins SNRNP70/U1-70K, SNRPA/U1-A and SNRPC/U1-C. SNRPC/U1-C interacts with U1 snRNA and the 5' splice-site region of the pre-mRNA (By similarity). Interacts (via N-terminus) with TIA1 (via C-terminus); thereby promoting spliceosomal U1 snRNP recruitment to 5' splice sites (By similarity).</text>
</comment>
<comment type="subcellular location">
    <subcellularLocation>
        <location evidence="2">Nucleus</location>
    </subcellularLocation>
</comment>
<comment type="tissue specificity">
    <text>Widely expressed. In the testis, expressed in somatic and germinal testicular cells but not in elongated spermatids.</text>
</comment>
<comment type="developmental stage">
    <text>First detected in the testis 18 days after birth. Levels increase successively between days 21-28. On day 42, levels decrease.</text>
</comment>
<comment type="similarity">
    <text evidence="2">Belongs to the U1 small nuclear ribonucleoprotein C family.</text>
</comment>
<keyword id="KW-0007">Acetylation</keyword>
<keyword id="KW-0479">Metal-binding</keyword>
<keyword id="KW-0539">Nucleus</keyword>
<keyword id="KW-0597">Phosphoprotein</keyword>
<keyword id="KW-1185">Reference proteome</keyword>
<keyword id="KW-0687">Ribonucleoprotein</keyword>
<keyword id="KW-0694">RNA-binding</keyword>
<keyword id="KW-0862">Zinc</keyword>
<keyword id="KW-0863">Zinc-finger</keyword>
<sequence length="159" mass="17364">MPKFYCDYCDTYLTHDSPSVRKTHCSGRKHKENVKDYYQKWMEEQAQSLIDKTTAAFQQGKIPPAPFSAPPPAGAMIPPPPSLPGPPRPGMMPAPHMGGPPMMPMMGPPPPGMMPVGPAPGMRPPMGGHMPMMPGPPMMRPPARPMMVPTRPGMTRPDR</sequence>
<proteinExistence type="evidence at protein level"/>
<name>RU1C_MOUSE</name>
<dbReference type="EMBL" id="X96767">
    <property type="protein sequence ID" value="CAA65542.1"/>
    <property type="molecule type" value="mRNA"/>
</dbReference>
<dbReference type="EMBL" id="U70315">
    <property type="protein sequence ID" value="AAB08894.1"/>
    <property type="molecule type" value="mRNA"/>
</dbReference>
<dbReference type="EMBL" id="BC008243">
    <property type="protein sequence ID" value="AAH08243.1"/>
    <property type="molecule type" value="mRNA"/>
</dbReference>
<dbReference type="CCDS" id="CCDS28570.1"/>
<dbReference type="RefSeq" id="NP_035562.1">
    <property type="nucleotide sequence ID" value="NM_011432.3"/>
</dbReference>
<dbReference type="SMR" id="Q62241"/>
<dbReference type="BioGRID" id="203373">
    <property type="interactions" value="23"/>
</dbReference>
<dbReference type="FunCoup" id="Q62241">
    <property type="interactions" value="2597"/>
</dbReference>
<dbReference type="IntAct" id="Q62241">
    <property type="interactions" value="2"/>
</dbReference>
<dbReference type="STRING" id="10090.ENSMUSP00000156707"/>
<dbReference type="iPTMnet" id="Q62241"/>
<dbReference type="PhosphoSitePlus" id="Q62241"/>
<dbReference type="SwissPalm" id="Q62241"/>
<dbReference type="jPOST" id="Q62241"/>
<dbReference type="PaxDb" id="10090-ENSMUSP00000063976"/>
<dbReference type="ProteomicsDB" id="256843"/>
<dbReference type="Pumba" id="Q62241"/>
<dbReference type="Antibodypedia" id="45711">
    <property type="antibodies" value="70 antibodies from 21 providers"/>
</dbReference>
<dbReference type="DNASU" id="20630"/>
<dbReference type="Ensembl" id="ENSMUST00000071006.9">
    <property type="protein sequence ID" value="ENSMUSP00000063976.8"/>
    <property type="gene ID" value="ENSMUSG00000024217.11"/>
</dbReference>
<dbReference type="Ensembl" id="ENSMUST00000232873.2">
    <property type="protein sequence ID" value="ENSMUSP00000156707.2"/>
    <property type="gene ID" value="ENSMUSG00000024217.11"/>
</dbReference>
<dbReference type="GeneID" id="20630"/>
<dbReference type="KEGG" id="mmu:20630"/>
<dbReference type="UCSC" id="uc008bps.1">
    <property type="organism name" value="mouse"/>
</dbReference>
<dbReference type="AGR" id="MGI:109489"/>
<dbReference type="CTD" id="6631"/>
<dbReference type="MGI" id="MGI:109489">
    <property type="gene designation" value="Snrpc"/>
</dbReference>
<dbReference type="VEuPathDB" id="HostDB:ENSMUSG00000024217"/>
<dbReference type="eggNOG" id="KOG3454">
    <property type="taxonomic scope" value="Eukaryota"/>
</dbReference>
<dbReference type="GeneTree" id="ENSGT00730000110997"/>
<dbReference type="HOGENOM" id="CLU_079697_3_0_1"/>
<dbReference type="InParanoid" id="Q62241"/>
<dbReference type="OMA" id="QMRPPLM"/>
<dbReference type="PhylomeDB" id="Q62241"/>
<dbReference type="TreeFam" id="TF313578"/>
<dbReference type="Reactome" id="R-MMU-72163">
    <property type="pathway name" value="mRNA Splicing - Major Pathway"/>
</dbReference>
<dbReference type="BioGRID-ORCS" id="20630">
    <property type="hits" value="18 hits in 79 CRISPR screens"/>
</dbReference>
<dbReference type="ChiTaRS" id="Snrpc">
    <property type="organism name" value="mouse"/>
</dbReference>
<dbReference type="PRO" id="PR:Q62241"/>
<dbReference type="Proteomes" id="UP000000589">
    <property type="component" value="Chromosome 17"/>
</dbReference>
<dbReference type="RNAct" id="Q62241">
    <property type="molecule type" value="protein"/>
</dbReference>
<dbReference type="Bgee" id="ENSMUSG00000024217">
    <property type="expression patterns" value="Expressed in embryonic brain and 77 other cell types or tissues"/>
</dbReference>
<dbReference type="ExpressionAtlas" id="Q62241">
    <property type="expression patterns" value="baseline and differential"/>
</dbReference>
<dbReference type="GO" id="GO:0015030">
    <property type="term" value="C:Cajal body"/>
    <property type="evidence" value="ECO:0007669"/>
    <property type="project" value="Ensembl"/>
</dbReference>
<dbReference type="GO" id="GO:0000243">
    <property type="term" value="C:commitment complex"/>
    <property type="evidence" value="ECO:0007669"/>
    <property type="project" value="UniProtKB-UniRule"/>
</dbReference>
<dbReference type="GO" id="GO:0005685">
    <property type="term" value="C:U1 snRNP"/>
    <property type="evidence" value="ECO:0000250"/>
    <property type="project" value="UniProtKB"/>
</dbReference>
<dbReference type="GO" id="GO:0071004">
    <property type="term" value="C:U2-type prespliceosome"/>
    <property type="evidence" value="ECO:0007669"/>
    <property type="project" value="UniProtKB-UniRule"/>
</dbReference>
<dbReference type="GO" id="GO:0003729">
    <property type="term" value="F:mRNA binding"/>
    <property type="evidence" value="ECO:0007669"/>
    <property type="project" value="UniProtKB-UniRule"/>
</dbReference>
<dbReference type="GO" id="GO:0030627">
    <property type="term" value="F:pre-mRNA 5'-splice site binding"/>
    <property type="evidence" value="ECO:0007669"/>
    <property type="project" value="InterPro"/>
</dbReference>
<dbReference type="GO" id="GO:0042803">
    <property type="term" value="F:protein homodimerization activity"/>
    <property type="evidence" value="ECO:0007669"/>
    <property type="project" value="Ensembl"/>
</dbReference>
<dbReference type="GO" id="GO:0003727">
    <property type="term" value="F:single-stranded RNA binding"/>
    <property type="evidence" value="ECO:0007669"/>
    <property type="project" value="Ensembl"/>
</dbReference>
<dbReference type="GO" id="GO:0030619">
    <property type="term" value="F:U1 snRNA binding"/>
    <property type="evidence" value="ECO:0007669"/>
    <property type="project" value="UniProtKB-UniRule"/>
</dbReference>
<dbReference type="GO" id="GO:0008270">
    <property type="term" value="F:zinc ion binding"/>
    <property type="evidence" value="ECO:0007669"/>
    <property type="project" value="UniProtKB-UniRule"/>
</dbReference>
<dbReference type="GO" id="GO:0000395">
    <property type="term" value="P:mRNA 5'-splice site recognition"/>
    <property type="evidence" value="ECO:0007669"/>
    <property type="project" value="UniProtKB-UniRule"/>
</dbReference>
<dbReference type="GO" id="GO:0000387">
    <property type="term" value="P:spliceosomal snRNP assembly"/>
    <property type="evidence" value="ECO:0007669"/>
    <property type="project" value="UniProtKB-UniRule"/>
</dbReference>
<dbReference type="FunFam" id="3.30.160.60:FF:000059">
    <property type="entry name" value="U1 small nuclear ribonucleoprotein C"/>
    <property type="match status" value="1"/>
</dbReference>
<dbReference type="Gene3D" id="3.30.160.60">
    <property type="entry name" value="Classic Zinc Finger"/>
    <property type="match status" value="1"/>
</dbReference>
<dbReference type="HAMAP" id="MF_03153">
    <property type="entry name" value="U1_C"/>
    <property type="match status" value="1"/>
</dbReference>
<dbReference type="InterPro" id="IPR000690">
    <property type="entry name" value="Matrin/U1-C_Znf_C2H2"/>
</dbReference>
<dbReference type="InterPro" id="IPR003604">
    <property type="entry name" value="Matrin/U1-like-C_Znf_C2H2"/>
</dbReference>
<dbReference type="InterPro" id="IPR013085">
    <property type="entry name" value="U1-CZ_Znf_C2H2"/>
</dbReference>
<dbReference type="InterPro" id="IPR017340">
    <property type="entry name" value="U1_snRNP-C"/>
</dbReference>
<dbReference type="InterPro" id="IPR036236">
    <property type="entry name" value="Znf_C2H2_sf"/>
</dbReference>
<dbReference type="PANTHER" id="PTHR31148">
    <property type="entry name" value="U1 SMALL NUCLEAR RIBONUCLEOPROTEIN C"/>
    <property type="match status" value="1"/>
</dbReference>
<dbReference type="PANTHER" id="PTHR31148:SF1">
    <property type="entry name" value="U1 SMALL NUCLEAR RIBONUCLEOPROTEIN C"/>
    <property type="match status" value="1"/>
</dbReference>
<dbReference type="Pfam" id="PF06220">
    <property type="entry name" value="zf-U1"/>
    <property type="match status" value="1"/>
</dbReference>
<dbReference type="PIRSF" id="PIRSF037969">
    <property type="entry name" value="U1_snRNP-C"/>
    <property type="match status" value="1"/>
</dbReference>
<dbReference type="SMART" id="SM00451">
    <property type="entry name" value="ZnF_U1"/>
    <property type="match status" value="1"/>
</dbReference>
<dbReference type="SUPFAM" id="SSF57667">
    <property type="entry name" value="beta-beta-alpha zinc fingers"/>
    <property type="match status" value="1"/>
</dbReference>
<dbReference type="PROSITE" id="PS50171">
    <property type="entry name" value="ZF_MATRIN"/>
    <property type="match status" value="1"/>
</dbReference>
<organism>
    <name type="scientific">Mus musculus</name>
    <name type="common">Mouse</name>
    <dbReference type="NCBI Taxonomy" id="10090"/>
    <lineage>
        <taxon>Eukaryota</taxon>
        <taxon>Metazoa</taxon>
        <taxon>Chordata</taxon>
        <taxon>Craniata</taxon>
        <taxon>Vertebrata</taxon>
        <taxon>Euteleostomi</taxon>
        <taxon>Mammalia</taxon>
        <taxon>Eutheria</taxon>
        <taxon>Euarchontoglires</taxon>
        <taxon>Glires</taxon>
        <taxon>Rodentia</taxon>
        <taxon>Myomorpha</taxon>
        <taxon>Muroidea</taxon>
        <taxon>Muridae</taxon>
        <taxon>Murinae</taxon>
        <taxon>Mus</taxon>
        <taxon>Mus</taxon>
    </lineage>
</organism>
<reference key="1">
    <citation type="journal article" date="1997" name="Gene">
        <title>Cloning and characterization of two processed pseudogenes and the cDNA for the murine U1 snRNP-specific protein C.</title>
        <authorList>
            <person name="Nelissen R.L.H."/>
            <person name="Klein Gunnewiek J.M.T."/>
            <person name="Lambermon M.H.L."/>
            <person name="van Venrooij W.J."/>
        </authorList>
    </citation>
    <scope>NUCLEOTIDE SEQUENCE [MRNA]</scope>
    <source>
        <tissue>Lymphocyte</tissue>
    </source>
</reference>
<reference key="2">
    <citation type="journal article" date="1997" name="Mol. Reprod. Dev.">
        <title>Molecular cloning and developmental expression of a small ribonuclear protein in the mouse testis.</title>
        <authorList>
            <person name="Morales C.R."/>
            <person name="Leyne M."/>
            <person name="El-Alfy M."/>
            <person name="Oko R."/>
        </authorList>
    </citation>
    <scope>NUCLEOTIDE SEQUENCE [MRNA]</scope>
    <source>
        <strain>CD-1</strain>
        <tissue>Kidney</tissue>
        <tissue>Testis</tissue>
    </source>
</reference>
<reference key="3">
    <citation type="journal article" date="2004" name="Genome Res.">
        <title>The status, quality, and expansion of the NIH full-length cDNA project: the Mammalian Gene Collection (MGC).</title>
        <authorList>
            <consortium name="The MGC Project Team"/>
        </authorList>
    </citation>
    <scope>NUCLEOTIDE SEQUENCE [LARGE SCALE MRNA]</scope>
    <source>
        <strain>FVB/N-3</strain>
        <tissue>Mammary gland</tissue>
    </source>
</reference>
<reference key="4">
    <citation type="journal article" date="2010" name="Cell">
        <title>A tissue-specific atlas of mouse protein phosphorylation and expression.</title>
        <authorList>
            <person name="Huttlin E.L."/>
            <person name="Jedrychowski M.P."/>
            <person name="Elias J.E."/>
            <person name="Goswami T."/>
            <person name="Rad R."/>
            <person name="Beausoleil S.A."/>
            <person name="Villen J."/>
            <person name="Haas W."/>
            <person name="Sowa M.E."/>
            <person name="Gygi S.P."/>
        </authorList>
    </citation>
    <scope>IDENTIFICATION BY MASS SPECTROMETRY [LARGE SCALE ANALYSIS]</scope>
    <source>
        <tissue>Brain</tissue>
        <tissue>Lung</tissue>
        <tissue>Spleen</tissue>
        <tissue>Testis</tissue>
    </source>
</reference>
<accession>Q62241</accession>
<feature type="chain" id="PRO_0000097526" description="U1 small nuclear ribonucleoprotein C">
    <location>
        <begin position="1"/>
        <end position="159"/>
    </location>
</feature>
<feature type="zinc finger region" description="Matrin-type" evidence="2">
    <location>
        <begin position="4"/>
        <end position="36"/>
    </location>
</feature>
<feature type="region of interest" description="Disordered" evidence="3">
    <location>
        <begin position="62"/>
        <end position="96"/>
    </location>
</feature>
<feature type="compositionally biased region" description="Pro residues" evidence="3">
    <location>
        <begin position="63"/>
        <end position="92"/>
    </location>
</feature>
<feature type="modified residue" description="Phosphotyrosine" evidence="1">
    <location>
        <position position="8"/>
    </location>
</feature>
<feature type="modified residue" description="Phosphoserine" evidence="1">
    <location>
        <position position="17"/>
    </location>
</feature>
<feature type="modified residue" description="N6-acetyllysine" evidence="1">
    <location>
        <position position="52"/>
    </location>
</feature>
<gene>
    <name evidence="2" type="primary">Snrpc</name>
    <name type="synonym">Snrp1c</name>
</gene>
<protein>
    <recommendedName>
        <fullName evidence="2">U1 small nuclear ribonucleoprotein C</fullName>
        <shortName evidence="2">U1 snRNP C</shortName>
        <shortName evidence="2">U1-C</shortName>
        <shortName evidence="2">U1C</shortName>
    </recommendedName>
</protein>